<keyword id="KW-0134">Cell wall</keyword>
<keyword id="KW-0349">Heme</keyword>
<keyword id="KW-0408">Iron</keyword>
<keyword id="KW-0479">Metal-binding</keyword>
<keyword id="KW-0572">Peptidoglycan-anchor</keyword>
<keyword id="KW-0964">Secreted</keyword>
<keyword id="KW-0732">Signal</keyword>
<protein>
    <recommendedName>
        <fullName>Iron-regulated surface determinant protein C</fullName>
    </recommendedName>
    <alternativeName>
        <fullName>Staphylococcal iron-regulated protein D</fullName>
    </alternativeName>
</protein>
<sequence length="227" mass="24855">MKNILKVFNTTILALIIIIATFSNSANAADSGTLNYEVYKYNTNDTSIANDYFNKPAKYIKKNGKLYVQITVNHSHWITGMSIEGHKENIISKNTAKDERTSEFEVSKLNGKIDGKIDVYIDEKVNGKPFKYDHHYNITYKFNGPTDVAGANAPGKDDKNSASGSDKGSDGTTTGQSESNSSNKDKVENPQTNAGTPAYIYAIPVASLALLIAITLFVRKKSKGNVE</sequence>
<feature type="signal peptide" evidence="3">
    <location>
        <begin position="1"/>
        <end position="28"/>
    </location>
</feature>
<feature type="chain" id="PRO_5000247263" description="Iron-regulated surface determinant protein C">
    <location>
        <begin position="29"/>
        <end position="192"/>
    </location>
</feature>
<feature type="propeptide" id="PRO_0000333251" description="Removed by sortase B" evidence="2">
    <location>
        <begin position="193"/>
        <end position="227"/>
    </location>
</feature>
<feature type="domain" description="NEAT" evidence="4">
    <location>
        <begin position="29"/>
        <end position="150"/>
    </location>
</feature>
<feature type="region of interest" description="Disordered" evidence="5">
    <location>
        <begin position="149"/>
        <end position="191"/>
    </location>
</feature>
<feature type="short sequence motif" description="NPQTN sorting signal" evidence="2">
    <location>
        <begin position="189"/>
        <end position="193"/>
    </location>
</feature>
<feature type="compositionally biased region" description="Low complexity" evidence="5">
    <location>
        <begin position="161"/>
        <end position="175"/>
    </location>
</feature>
<feature type="binding site" evidence="2">
    <location>
        <position position="47"/>
    </location>
    <ligand>
        <name>heme</name>
        <dbReference type="ChEBI" id="CHEBI:30413"/>
    </ligand>
</feature>
<feature type="binding site" evidence="2">
    <location>
        <position position="48"/>
    </location>
    <ligand>
        <name>heme</name>
        <dbReference type="ChEBI" id="CHEBI:30413"/>
    </ligand>
</feature>
<feature type="binding site" description="axial binding residue" evidence="1">
    <location>
        <position position="132"/>
    </location>
    <ligand>
        <name>heme</name>
        <dbReference type="ChEBI" id="CHEBI:30413"/>
    </ligand>
    <ligandPart>
        <name>Fe</name>
        <dbReference type="ChEBI" id="CHEBI:18248"/>
    </ligandPart>
</feature>
<feature type="binding site" evidence="2">
    <location>
        <position position="136"/>
    </location>
    <ligand>
        <name>heme</name>
        <dbReference type="ChEBI" id="CHEBI:30413"/>
    </ligand>
</feature>
<feature type="modified residue" description="Pentaglycyl murein peptidoglycan amidated threonine" evidence="2">
    <location>
        <position position="192"/>
    </location>
</feature>
<reference key="1">
    <citation type="submission" date="2007-05" db="EMBL/GenBank/DDBJ databases">
        <title>Complete sequence of chromosome of Staphylococcus aureus subsp. aureus JH9.</title>
        <authorList>
            <consortium name="US DOE Joint Genome Institute"/>
            <person name="Copeland A."/>
            <person name="Lucas S."/>
            <person name="Lapidus A."/>
            <person name="Barry K."/>
            <person name="Detter J.C."/>
            <person name="Glavina del Rio T."/>
            <person name="Hammon N."/>
            <person name="Israni S."/>
            <person name="Pitluck S."/>
            <person name="Chain P."/>
            <person name="Malfatti S."/>
            <person name="Shin M."/>
            <person name="Vergez L."/>
            <person name="Schmutz J."/>
            <person name="Larimer F."/>
            <person name="Land M."/>
            <person name="Hauser L."/>
            <person name="Kyrpides N."/>
            <person name="Kim E."/>
            <person name="Tomasz A."/>
            <person name="Richardson P."/>
        </authorList>
    </citation>
    <scope>NUCLEOTIDE SEQUENCE [LARGE SCALE GENOMIC DNA]</scope>
    <source>
        <strain>JH9</strain>
    </source>
</reference>
<organism>
    <name type="scientific">Staphylococcus aureus (strain JH9)</name>
    <dbReference type="NCBI Taxonomy" id="359786"/>
    <lineage>
        <taxon>Bacteria</taxon>
        <taxon>Bacillati</taxon>
        <taxon>Bacillota</taxon>
        <taxon>Bacilli</taxon>
        <taxon>Bacillales</taxon>
        <taxon>Staphylococcaceae</taxon>
        <taxon>Staphylococcus</taxon>
    </lineage>
</organism>
<evidence type="ECO:0000250" key="1"/>
<evidence type="ECO:0000250" key="2">
    <source>
        <dbReference type="UniProtKB" id="Q8KQR1"/>
    </source>
</evidence>
<evidence type="ECO:0000255" key="3"/>
<evidence type="ECO:0000255" key="4">
    <source>
        <dbReference type="PROSITE-ProRule" id="PRU00337"/>
    </source>
</evidence>
<evidence type="ECO:0000256" key="5">
    <source>
        <dbReference type="SAM" id="MobiDB-lite"/>
    </source>
</evidence>
<evidence type="ECO:0000305" key="6"/>
<accession>A5IS17</accession>
<gene>
    <name type="primary">isdC</name>
    <name type="synonym">sirD</name>
    <name type="ordered locus">SaurJH9_1190</name>
</gene>
<dbReference type="EMBL" id="CP000703">
    <property type="protein sequence ID" value="ABQ48990.1"/>
    <property type="molecule type" value="Genomic_DNA"/>
</dbReference>
<dbReference type="RefSeq" id="WP_000789821.1">
    <property type="nucleotide sequence ID" value="NC_009487.1"/>
</dbReference>
<dbReference type="BMRB" id="A5IS17"/>
<dbReference type="SMR" id="A5IS17"/>
<dbReference type="KEGG" id="saj:SaurJH9_1190"/>
<dbReference type="HOGENOM" id="CLU_092243_1_0_9"/>
<dbReference type="GO" id="GO:0005576">
    <property type="term" value="C:extracellular region"/>
    <property type="evidence" value="ECO:0007669"/>
    <property type="project" value="UniProtKB-KW"/>
</dbReference>
<dbReference type="GO" id="GO:0009274">
    <property type="term" value="C:peptidoglycan-based cell wall"/>
    <property type="evidence" value="ECO:0007669"/>
    <property type="project" value="InterPro"/>
</dbReference>
<dbReference type="GO" id="GO:0030492">
    <property type="term" value="F:hemoglobin binding"/>
    <property type="evidence" value="ECO:0007669"/>
    <property type="project" value="InterPro"/>
</dbReference>
<dbReference type="GO" id="GO:0046872">
    <property type="term" value="F:metal ion binding"/>
    <property type="evidence" value="ECO:0007669"/>
    <property type="project" value="UniProtKB-KW"/>
</dbReference>
<dbReference type="GO" id="GO:0015886">
    <property type="term" value="P:heme transport"/>
    <property type="evidence" value="ECO:0007669"/>
    <property type="project" value="InterPro"/>
</dbReference>
<dbReference type="CDD" id="cd06920">
    <property type="entry name" value="NEAT"/>
    <property type="match status" value="1"/>
</dbReference>
<dbReference type="Gene3D" id="2.60.40.1850">
    <property type="match status" value="1"/>
</dbReference>
<dbReference type="InterPro" id="IPR019909">
    <property type="entry name" value="Haem_uptake_protein_IsdC"/>
</dbReference>
<dbReference type="InterPro" id="IPR050436">
    <property type="entry name" value="IsdA"/>
</dbReference>
<dbReference type="InterPro" id="IPR006635">
    <property type="entry name" value="NEAT_dom"/>
</dbReference>
<dbReference type="InterPro" id="IPR037250">
    <property type="entry name" value="NEAT_dom_sf"/>
</dbReference>
<dbReference type="InterPro" id="IPR017505">
    <property type="entry name" value="Sortase_SrtB_sig_NPQTN"/>
</dbReference>
<dbReference type="NCBIfam" id="TIGR03656">
    <property type="entry name" value="IsdC"/>
    <property type="match status" value="1"/>
</dbReference>
<dbReference type="NCBIfam" id="TIGR03068">
    <property type="entry name" value="srtB_sig_NPQTN"/>
    <property type="match status" value="1"/>
</dbReference>
<dbReference type="PANTHER" id="PTHR37824">
    <property type="entry name" value="IRON-REGULATED SURFACE DETERMINANT PROTEIN C"/>
    <property type="match status" value="1"/>
</dbReference>
<dbReference type="PANTHER" id="PTHR37824:SF1">
    <property type="entry name" value="IRON-REGULATED SURFACE DETERMINANT PROTEIN C"/>
    <property type="match status" value="1"/>
</dbReference>
<dbReference type="Pfam" id="PF05031">
    <property type="entry name" value="NEAT"/>
    <property type="match status" value="1"/>
</dbReference>
<dbReference type="SMART" id="SM00725">
    <property type="entry name" value="NEAT"/>
    <property type="match status" value="1"/>
</dbReference>
<dbReference type="SUPFAM" id="SSF158911">
    <property type="entry name" value="NEAT domain-like"/>
    <property type="match status" value="1"/>
</dbReference>
<dbReference type="PROSITE" id="PS50978">
    <property type="entry name" value="NEAT"/>
    <property type="match status" value="1"/>
</dbReference>
<proteinExistence type="inferred from homology"/>
<comment type="function">
    <text evidence="1">Involved in heme (porphyrin) scavenging. Binds hemoglobin and almost exclusively free-base protoporphyrin IX. Probably has a role as the central conduit of the isd heme uptake system, i.e. mediates the transfer of the iron-containing nutrient from IsdABH to the membrane translocation system IsdDEF. Hemin-free IsdC (apo-IsdC) acquires hemin from hemin-containing IsdA (holo-IsdA) probably through the activated holo-IsdA-apo-IsdC complex and due to the higher affinity of apo-IsdC for the cofactor. The reaction is reversible (By similarity).</text>
</comment>
<comment type="subunit">
    <text evidence="1">Monomer. Interacts with IsdA (By similarity).</text>
</comment>
<comment type="subcellular location">
    <subcellularLocation>
        <location evidence="1">Secreted</location>
        <location evidence="1">Cell wall</location>
        <topology evidence="1">Peptidoglycan-anchor</topology>
    </subcellularLocation>
    <text evidence="2">Anchored to the cell wall by sortase B (By similarity).</text>
</comment>
<comment type="induction">
    <text evidence="1">Repressed by fur in the presence of iron.</text>
</comment>
<comment type="domain">
    <text evidence="1">The NEAT domain binds Fe(3+) heme iron. Reduction of the high-spin Fe(3+) heme iron to high-spin Fe(2+) results in loss of the heme from the binding site of the protein due to the absence of a proximal histidine (By similarity).</text>
</comment>
<comment type="similarity">
    <text evidence="6">Belongs to the IsdC family.</text>
</comment>
<name>ISDC_STAA9</name>